<dbReference type="EC" id="1.8.4.8" evidence="1"/>
<dbReference type="EMBL" id="CP000038">
    <property type="protein sequence ID" value="AAZ89516.1"/>
    <property type="molecule type" value="Genomic_DNA"/>
</dbReference>
<dbReference type="RefSeq" id="WP_000039851.1">
    <property type="nucleotide sequence ID" value="NC_007384.1"/>
</dbReference>
<dbReference type="SMR" id="Q3YY96"/>
<dbReference type="GeneID" id="93779241"/>
<dbReference type="KEGG" id="ssn:SSON_2915"/>
<dbReference type="HOGENOM" id="CLU_044089_3_0_6"/>
<dbReference type="UniPathway" id="UPA00140">
    <property type="reaction ID" value="UER00206"/>
</dbReference>
<dbReference type="Proteomes" id="UP000002529">
    <property type="component" value="Chromosome"/>
</dbReference>
<dbReference type="GO" id="GO:0005737">
    <property type="term" value="C:cytoplasm"/>
    <property type="evidence" value="ECO:0007669"/>
    <property type="project" value="UniProtKB-SubCell"/>
</dbReference>
<dbReference type="GO" id="GO:0004604">
    <property type="term" value="F:phosphoadenylyl-sulfate reductase (thioredoxin) activity"/>
    <property type="evidence" value="ECO:0007669"/>
    <property type="project" value="UniProtKB-UniRule"/>
</dbReference>
<dbReference type="GO" id="GO:0070814">
    <property type="term" value="P:hydrogen sulfide biosynthetic process"/>
    <property type="evidence" value="ECO:0007669"/>
    <property type="project" value="UniProtKB-UniRule"/>
</dbReference>
<dbReference type="GO" id="GO:0019379">
    <property type="term" value="P:sulfate assimilation, phosphoadenylyl sulfate reduction by phosphoadenylyl-sulfate reductase (thioredoxin)"/>
    <property type="evidence" value="ECO:0007669"/>
    <property type="project" value="UniProtKB-UniRule"/>
</dbReference>
<dbReference type="CDD" id="cd23945">
    <property type="entry name" value="PAPS_reductase"/>
    <property type="match status" value="1"/>
</dbReference>
<dbReference type="FunFam" id="3.40.50.620:FF:000043">
    <property type="entry name" value="Phosphoadenosine phosphosulfate reductase"/>
    <property type="match status" value="1"/>
</dbReference>
<dbReference type="Gene3D" id="3.40.50.620">
    <property type="entry name" value="HUPs"/>
    <property type="match status" value="1"/>
</dbReference>
<dbReference type="HAMAP" id="MF_00063">
    <property type="entry name" value="CysH"/>
    <property type="match status" value="1"/>
</dbReference>
<dbReference type="InterPro" id="IPR004511">
    <property type="entry name" value="PAPS/APS_Rdtase"/>
</dbReference>
<dbReference type="InterPro" id="IPR002500">
    <property type="entry name" value="PAPS_reduct_dom"/>
</dbReference>
<dbReference type="InterPro" id="IPR011800">
    <property type="entry name" value="PAPS_reductase_CysH"/>
</dbReference>
<dbReference type="InterPro" id="IPR014729">
    <property type="entry name" value="Rossmann-like_a/b/a_fold"/>
</dbReference>
<dbReference type="NCBIfam" id="TIGR00434">
    <property type="entry name" value="cysH"/>
    <property type="match status" value="1"/>
</dbReference>
<dbReference type="NCBIfam" id="TIGR02057">
    <property type="entry name" value="PAPS_reductase"/>
    <property type="match status" value="1"/>
</dbReference>
<dbReference type="NCBIfam" id="NF002537">
    <property type="entry name" value="PRK02090.1"/>
    <property type="match status" value="1"/>
</dbReference>
<dbReference type="PANTHER" id="PTHR46509">
    <property type="entry name" value="PHOSPHOADENOSINE PHOSPHOSULFATE REDUCTASE"/>
    <property type="match status" value="1"/>
</dbReference>
<dbReference type="PANTHER" id="PTHR46509:SF1">
    <property type="entry name" value="PHOSPHOADENOSINE PHOSPHOSULFATE REDUCTASE"/>
    <property type="match status" value="1"/>
</dbReference>
<dbReference type="Pfam" id="PF01507">
    <property type="entry name" value="PAPS_reduct"/>
    <property type="match status" value="1"/>
</dbReference>
<dbReference type="PIRSF" id="PIRSF000857">
    <property type="entry name" value="PAPS_reductase"/>
    <property type="match status" value="1"/>
</dbReference>
<dbReference type="SUPFAM" id="SSF52402">
    <property type="entry name" value="Adenine nucleotide alpha hydrolases-like"/>
    <property type="match status" value="1"/>
</dbReference>
<proteinExistence type="inferred from homology"/>
<keyword id="KW-0963">Cytoplasm</keyword>
<keyword id="KW-0560">Oxidoreductase</keyword>
<keyword id="KW-1185">Reference proteome</keyword>
<accession>Q3YY96</accession>
<sequence length="244" mass="27992">MSKLDLNALNELPKVDRILALAETNAELEKLDAEGRVAWALDNLPGEYVLSSSFGIQAAVSLHLVNQIRPDIPVILTDTGYLFPETYRFIDELTDKLKLNLKVYRATESAAWQEARYGKLWEQGVEGIEKYNDINKVEPMNRALKELNAQTWFAGLRREQSGSRANLPVLAIQRGVFKVLPIIDWDNRTIYQYLQKHGLKYHPLWDEGYLSVGDTHTTRKWEPGMSEEETRFFGLKRECGLHEG</sequence>
<organism>
    <name type="scientific">Shigella sonnei (strain Ss046)</name>
    <dbReference type="NCBI Taxonomy" id="300269"/>
    <lineage>
        <taxon>Bacteria</taxon>
        <taxon>Pseudomonadati</taxon>
        <taxon>Pseudomonadota</taxon>
        <taxon>Gammaproteobacteria</taxon>
        <taxon>Enterobacterales</taxon>
        <taxon>Enterobacteriaceae</taxon>
        <taxon>Shigella</taxon>
    </lineage>
</organism>
<comment type="function">
    <text evidence="1">Catalyzes the formation of sulfite from phosphoadenosine 5'-phosphosulfate (PAPS) using thioredoxin as an electron donor.</text>
</comment>
<comment type="catalytic activity">
    <reaction evidence="1">
        <text>[thioredoxin]-disulfide + sulfite + adenosine 3',5'-bisphosphate + 2 H(+) = [thioredoxin]-dithiol + 3'-phosphoadenylyl sulfate</text>
        <dbReference type="Rhea" id="RHEA:11724"/>
        <dbReference type="Rhea" id="RHEA-COMP:10698"/>
        <dbReference type="Rhea" id="RHEA-COMP:10700"/>
        <dbReference type="ChEBI" id="CHEBI:15378"/>
        <dbReference type="ChEBI" id="CHEBI:17359"/>
        <dbReference type="ChEBI" id="CHEBI:29950"/>
        <dbReference type="ChEBI" id="CHEBI:50058"/>
        <dbReference type="ChEBI" id="CHEBI:58339"/>
        <dbReference type="ChEBI" id="CHEBI:58343"/>
        <dbReference type="EC" id="1.8.4.8"/>
    </reaction>
</comment>
<comment type="pathway">
    <text evidence="1">Sulfur metabolism; hydrogen sulfide biosynthesis; sulfite from sulfate: step 3/3.</text>
</comment>
<comment type="subcellular location">
    <subcellularLocation>
        <location evidence="1">Cytoplasm</location>
    </subcellularLocation>
</comment>
<comment type="similarity">
    <text evidence="1">Belongs to the PAPS reductase family. CysH subfamily.</text>
</comment>
<gene>
    <name evidence="1" type="primary">cysH</name>
    <name type="ordered locus">SSON_2915</name>
</gene>
<protein>
    <recommendedName>
        <fullName evidence="1">Phosphoadenosine 5'-phosphosulfate reductase</fullName>
        <shortName evidence="1">PAPS reductase</shortName>
        <ecNumber evidence="1">1.8.4.8</ecNumber>
    </recommendedName>
    <alternativeName>
        <fullName evidence="1">3'-phosphoadenylylsulfate reductase</fullName>
    </alternativeName>
    <alternativeName>
        <fullName evidence="1">PAPS reductase, thioredoxin dependent</fullName>
    </alternativeName>
    <alternativeName>
        <fullName evidence="1">PAPS sulfotransferase</fullName>
    </alternativeName>
    <alternativeName>
        <fullName evidence="1">PAdoPS reductase</fullName>
    </alternativeName>
</protein>
<name>CYSH_SHISS</name>
<reference key="1">
    <citation type="journal article" date="2005" name="Nucleic Acids Res.">
        <title>Genome dynamics and diversity of Shigella species, the etiologic agents of bacillary dysentery.</title>
        <authorList>
            <person name="Yang F."/>
            <person name="Yang J."/>
            <person name="Zhang X."/>
            <person name="Chen L."/>
            <person name="Jiang Y."/>
            <person name="Yan Y."/>
            <person name="Tang X."/>
            <person name="Wang J."/>
            <person name="Xiong Z."/>
            <person name="Dong J."/>
            <person name="Xue Y."/>
            <person name="Zhu Y."/>
            <person name="Xu X."/>
            <person name="Sun L."/>
            <person name="Chen S."/>
            <person name="Nie H."/>
            <person name="Peng J."/>
            <person name="Xu J."/>
            <person name="Wang Y."/>
            <person name="Yuan Z."/>
            <person name="Wen Y."/>
            <person name="Yao Z."/>
            <person name="Shen Y."/>
            <person name="Qiang B."/>
            <person name="Hou Y."/>
            <person name="Yu J."/>
            <person name="Jin Q."/>
        </authorList>
    </citation>
    <scope>NUCLEOTIDE SEQUENCE [LARGE SCALE GENOMIC DNA]</scope>
    <source>
        <strain>Ss046</strain>
    </source>
</reference>
<feature type="chain" id="PRO_1000008939" description="Phosphoadenosine 5'-phosphosulfate reductase">
    <location>
        <begin position="1"/>
        <end position="244"/>
    </location>
</feature>
<feature type="active site" description="Nucleophile; cysteine thiosulfonate intermediate" evidence="1">
    <location>
        <position position="239"/>
    </location>
</feature>
<evidence type="ECO:0000255" key="1">
    <source>
        <dbReference type="HAMAP-Rule" id="MF_00063"/>
    </source>
</evidence>